<feature type="chain" id="PRO_0000348037" description="tRNA 5-methylaminomethyl-2-thiouridine biosynthesis bifunctional protein MnmC">
    <location>
        <begin position="1"/>
        <end position="680"/>
    </location>
</feature>
<feature type="region of interest" description="tRNA (mnm(5)s(2)U34)-methyltransferase">
    <location>
        <begin position="1"/>
        <end position="267"/>
    </location>
</feature>
<feature type="region of interest" description="FAD-dependent cmnm(5)s(2)U34 oxidoreductase">
    <location>
        <begin position="273"/>
        <end position="680"/>
    </location>
</feature>
<gene>
    <name evidence="1" type="primary">mnmC</name>
    <name type="ordered locus">Sputw3181_1562</name>
</gene>
<proteinExistence type="inferred from homology"/>
<protein>
    <recommendedName>
        <fullName evidence="1">tRNA 5-methylaminomethyl-2-thiouridine biosynthesis bifunctional protein MnmC</fullName>
        <shortName evidence="1">tRNA mnm(5)s(2)U biosynthesis bifunctional protein</shortName>
    </recommendedName>
    <domain>
        <recommendedName>
            <fullName evidence="1">tRNA (mnm(5)s(2)U34)-methyltransferase</fullName>
            <ecNumber evidence="1">2.1.1.61</ecNumber>
        </recommendedName>
    </domain>
    <domain>
        <recommendedName>
            <fullName evidence="1">FAD-dependent cmnm(5)s(2)U34 oxidoreductase</fullName>
            <ecNumber evidence="1">1.5.-.-</ecNumber>
        </recommendedName>
    </domain>
</protein>
<reference key="1">
    <citation type="submission" date="2006-12" db="EMBL/GenBank/DDBJ databases">
        <title>Complete sequence of Shewanella sp. W3-18-1.</title>
        <authorList>
            <consortium name="US DOE Joint Genome Institute"/>
            <person name="Copeland A."/>
            <person name="Lucas S."/>
            <person name="Lapidus A."/>
            <person name="Barry K."/>
            <person name="Detter J.C."/>
            <person name="Glavina del Rio T."/>
            <person name="Hammon N."/>
            <person name="Israni S."/>
            <person name="Dalin E."/>
            <person name="Tice H."/>
            <person name="Pitluck S."/>
            <person name="Chain P."/>
            <person name="Malfatti S."/>
            <person name="Shin M."/>
            <person name="Vergez L."/>
            <person name="Schmutz J."/>
            <person name="Larimer F."/>
            <person name="Land M."/>
            <person name="Hauser L."/>
            <person name="Kyrpides N."/>
            <person name="Lykidis A."/>
            <person name="Tiedje J."/>
            <person name="Richardson P."/>
        </authorList>
    </citation>
    <scope>NUCLEOTIDE SEQUENCE [LARGE SCALE GENOMIC DNA]</scope>
    <source>
        <strain>W3-18-1</strain>
    </source>
</reference>
<evidence type="ECO:0000255" key="1">
    <source>
        <dbReference type="HAMAP-Rule" id="MF_01102"/>
    </source>
</evidence>
<organism>
    <name type="scientific">Shewanella sp. (strain W3-18-1)</name>
    <dbReference type="NCBI Taxonomy" id="351745"/>
    <lineage>
        <taxon>Bacteria</taxon>
        <taxon>Pseudomonadati</taxon>
        <taxon>Pseudomonadota</taxon>
        <taxon>Gammaproteobacteria</taxon>
        <taxon>Alteromonadales</taxon>
        <taxon>Shewanellaceae</taxon>
        <taxon>Shewanella</taxon>
    </lineage>
</organism>
<keyword id="KW-0963">Cytoplasm</keyword>
<keyword id="KW-0274">FAD</keyword>
<keyword id="KW-0285">Flavoprotein</keyword>
<keyword id="KW-0489">Methyltransferase</keyword>
<keyword id="KW-0511">Multifunctional enzyme</keyword>
<keyword id="KW-0560">Oxidoreductase</keyword>
<keyword id="KW-0949">S-adenosyl-L-methionine</keyword>
<keyword id="KW-0808">Transferase</keyword>
<keyword id="KW-0819">tRNA processing</keyword>
<accession>A1RIA5</accession>
<dbReference type="EC" id="2.1.1.61" evidence="1"/>
<dbReference type="EC" id="1.5.-.-" evidence="1"/>
<dbReference type="EMBL" id="CP000503">
    <property type="protein sequence ID" value="ABM24400.1"/>
    <property type="molecule type" value="Genomic_DNA"/>
</dbReference>
<dbReference type="RefSeq" id="WP_011788900.1">
    <property type="nucleotide sequence ID" value="NC_008750.1"/>
</dbReference>
<dbReference type="SMR" id="A1RIA5"/>
<dbReference type="KEGG" id="shw:Sputw3181_1562"/>
<dbReference type="HOGENOM" id="CLU_022427_2_1_6"/>
<dbReference type="Proteomes" id="UP000002597">
    <property type="component" value="Chromosome"/>
</dbReference>
<dbReference type="GO" id="GO:0005737">
    <property type="term" value="C:cytoplasm"/>
    <property type="evidence" value="ECO:0007669"/>
    <property type="project" value="UniProtKB-SubCell"/>
</dbReference>
<dbReference type="GO" id="GO:0050660">
    <property type="term" value="F:flavin adenine dinucleotide binding"/>
    <property type="evidence" value="ECO:0007669"/>
    <property type="project" value="UniProtKB-UniRule"/>
</dbReference>
<dbReference type="GO" id="GO:0016645">
    <property type="term" value="F:oxidoreductase activity, acting on the CH-NH group of donors"/>
    <property type="evidence" value="ECO:0007669"/>
    <property type="project" value="InterPro"/>
</dbReference>
<dbReference type="GO" id="GO:0004808">
    <property type="term" value="F:tRNA (5-methylaminomethyl-2-thiouridylate)(34)-methyltransferase activity"/>
    <property type="evidence" value="ECO:0007669"/>
    <property type="project" value="UniProtKB-EC"/>
</dbReference>
<dbReference type="GO" id="GO:0032259">
    <property type="term" value="P:methylation"/>
    <property type="evidence" value="ECO:0007669"/>
    <property type="project" value="UniProtKB-KW"/>
</dbReference>
<dbReference type="GO" id="GO:0002098">
    <property type="term" value="P:tRNA wobble uridine modification"/>
    <property type="evidence" value="ECO:0007669"/>
    <property type="project" value="TreeGrafter"/>
</dbReference>
<dbReference type="Gene3D" id="3.30.9.10">
    <property type="entry name" value="D-Amino Acid Oxidase, subunit A, domain 2"/>
    <property type="match status" value="1"/>
</dbReference>
<dbReference type="Gene3D" id="3.50.50.60">
    <property type="entry name" value="FAD/NAD(P)-binding domain"/>
    <property type="match status" value="1"/>
</dbReference>
<dbReference type="Gene3D" id="3.40.50.150">
    <property type="entry name" value="Vaccinia Virus protein VP39"/>
    <property type="match status" value="1"/>
</dbReference>
<dbReference type="HAMAP" id="MF_01102">
    <property type="entry name" value="MnmC"/>
    <property type="match status" value="1"/>
</dbReference>
<dbReference type="InterPro" id="IPR006076">
    <property type="entry name" value="FAD-dep_OxRdtase"/>
</dbReference>
<dbReference type="InterPro" id="IPR036188">
    <property type="entry name" value="FAD/NAD-bd_sf"/>
</dbReference>
<dbReference type="InterPro" id="IPR029063">
    <property type="entry name" value="SAM-dependent_MTases_sf"/>
</dbReference>
<dbReference type="InterPro" id="IPR023032">
    <property type="entry name" value="tRNA_MAMT_biosynth_bifunc_MnmC"/>
</dbReference>
<dbReference type="InterPro" id="IPR017610">
    <property type="entry name" value="tRNA_S-uridine_synth_MnmC_C"/>
</dbReference>
<dbReference type="NCBIfam" id="TIGR03197">
    <property type="entry name" value="MnmC_Cterm"/>
    <property type="match status" value="1"/>
</dbReference>
<dbReference type="PANTHER" id="PTHR13847">
    <property type="entry name" value="SARCOSINE DEHYDROGENASE-RELATED"/>
    <property type="match status" value="1"/>
</dbReference>
<dbReference type="PANTHER" id="PTHR13847:SF283">
    <property type="entry name" value="TRNA 5-METHYLAMINOMETHYL-2-THIOURIDINE BIOSYNTHESIS BIFUNCTIONAL PROTEIN MNMC"/>
    <property type="match status" value="1"/>
</dbReference>
<dbReference type="Pfam" id="PF01266">
    <property type="entry name" value="DAO"/>
    <property type="match status" value="1"/>
</dbReference>
<dbReference type="SUPFAM" id="SSF51905">
    <property type="entry name" value="FAD/NAD(P)-binding domain"/>
    <property type="match status" value="1"/>
</dbReference>
<sequence>MTAEPNKPCQIKRDYPQLINLYPATAHNDAHYLSKLSIYQQRVFEAHSQQKLLVLGQMGLGNGLELLSWWRTQTNPNQRLLLKVFEPHPINAYELKLLWDQSASLAKVPELELLAQRLLHTEPTAIIGCQRLIFDDGRTTIDLHFGDIQSQLSSLIHSPLHPVQHWLVLPHLQNGLHQQIHWQMAKLSDDSATVATIGLNESSGLSETTVNRFQACGFEVRDFTCAEIQTNPQPDAILLHERHVLRRQDAKAYAFNPMAAILSSDAPSSIAIIGGGLASAHLALSLAERGQSTQIFCKDAKLGQGASGNRQGAIYPLLTPENDELSRFFQQAFLFSRRRVQALTSAPAPNQTPISHNFCGVLQTAHDERSQLRLDKIIQSQNWPSEIAYRVDAQQANCLANINIDKSGFFYPLAGWVCPYEYAEAALQKAQQLTEVKLHLETEILEIEHQSEGWYLITAKHRFGPFAQVVLANGAALTQFDASNKLQISPFRGQVSHVPAQFQLSQLATVLCANGYLTPSHEGLHCLGASYVKEPKHLDFCPQEQQENLAKMHESYPDQGWLDDIDMSGNNARVGVRMVTRDHFPMMGCAPDVPKIIKDYAQHQLTKESRHYWQTTPAPVHEGLYILGGLGSRGLSSGPLAAECLAAQLCSEPIPLDKATLCKLNPNRMWLRKLLKGKSL</sequence>
<comment type="function">
    <text evidence="1">Catalyzes the last two steps in the biosynthesis of 5-methylaminomethyl-2-thiouridine (mnm(5)s(2)U) at the wobble position (U34) in tRNA. Catalyzes the FAD-dependent demodification of cmnm(5)s(2)U34 to nm(5)s(2)U34, followed by the transfer of a methyl group from S-adenosyl-L-methionine to nm(5)s(2)U34, to form mnm(5)s(2)U34.</text>
</comment>
<comment type="catalytic activity">
    <reaction evidence="1">
        <text>5-aminomethyl-2-thiouridine(34) in tRNA + S-adenosyl-L-methionine = 5-methylaminomethyl-2-thiouridine(34) in tRNA + S-adenosyl-L-homocysteine + H(+)</text>
        <dbReference type="Rhea" id="RHEA:19569"/>
        <dbReference type="Rhea" id="RHEA-COMP:10195"/>
        <dbReference type="Rhea" id="RHEA-COMP:10197"/>
        <dbReference type="ChEBI" id="CHEBI:15378"/>
        <dbReference type="ChEBI" id="CHEBI:57856"/>
        <dbReference type="ChEBI" id="CHEBI:59789"/>
        <dbReference type="ChEBI" id="CHEBI:74454"/>
        <dbReference type="ChEBI" id="CHEBI:74455"/>
        <dbReference type="EC" id="2.1.1.61"/>
    </reaction>
</comment>
<comment type="cofactor">
    <cofactor evidence="1">
        <name>FAD</name>
        <dbReference type="ChEBI" id="CHEBI:57692"/>
    </cofactor>
</comment>
<comment type="subcellular location">
    <subcellularLocation>
        <location evidence="1">Cytoplasm</location>
    </subcellularLocation>
</comment>
<comment type="similarity">
    <text evidence="1">In the N-terminal section; belongs to the methyltransferase superfamily. tRNA (mnm(5)s(2)U34)-methyltransferase family.</text>
</comment>
<comment type="similarity">
    <text evidence="1">In the C-terminal section; belongs to the DAO family.</text>
</comment>
<name>MNMC_SHESW</name>